<accession>B8G5X7</accession>
<reference key="1">
    <citation type="submission" date="2008-12" db="EMBL/GenBank/DDBJ databases">
        <title>Complete sequence of Chloroflexus aggregans DSM 9485.</title>
        <authorList>
            <consortium name="US DOE Joint Genome Institute"/>
            <person name="Lucas S."/>
            <person name="Copeland A."/>
            <person name="Lapidus A."/>
            <person name="Glavina del Rio T."/>
            <person name="Dalin E."/>
            <person name="Tice H."/>
            <person name="Pitluck S."/>
            <person name="Foster B."/>
            <person name="Larimer F."/>
            <person name="Land M."/>
            <person name="Hauser L."/>
            <person name="Kyrpides N."/>
            <person name="Mikhailova N."/>
            <person name="Bryant D.A."/>
            <person name="Richardson P."/>
        </authorList>
    </citation>
    <scope>NUCLEOTIDE SEQUENCE [LARGE SCALE GENOMIC DNA]</scope>
    <source>
        <strain>MD-66 / DSM 9485</strain>
    </source>
</reference>
<name>MRAY_CHLAD</name>
<gene>
    <name evidence="1" type="primary">mraY</name>
    <name type="ordered locus">Cagg_2848</name>
</gene>
<proteinExistence type="inferred from homology"/>
<evidence type="ECO:0000255" key="1">
    <source>
        <dbReference type="HAMAP-Rule" id="MF_00038"/>
    </source>
</evidence>
<sequence>MSVLRAVLVQDMARALLLAAAAFILTLIVGGWWVHFARKHKLGKRIRPDGPQSHLVKVGTPTMGGVMIVSTVVVLTVLFNLVDRWSMLLPLGVMISFAVLGAIDDWLSLTGTRSKTHGFTVRFKFWIMTAVAFVASLALYLPQPYGLEHEGLVQIPFVGEVNIGLWFIPIAVLIIVFISNAVNITDGLDSLAGWNLTLSFGAYGVITFLAEPRLTNLMAFCFTVVGACAAFLWYNAYPAQVFMGDLGALSLGATLAVVALQSQQWILLPVIGIVFVVEALSTLIQTGYFKWTKWRYGEGRRVFKMAPLHHHFELLGWSQPQVTQRFVLIGTVAAMVGISLALIFGSPQSQTQVDQPAMIVQETDGVR</sequence>
<feature type="chain" id="PRO_1000117172" description="Phospho-N-acetylmuramoyl-pentapeptide-transferase">
    <location>
        <begin position="1"/>
        <end position="367"/>
    </location>
</feature>
<feature type="transmembrane region" description="Helical" evidence="1">
    <location>
        <begin position="16"/>
        <end position="36"/>
    </location>
</feature>
<feature type="transmembrane region" description="Helical" evidence="1">
    <location>
        <begin position="62"/>
        <end position="82"/>
    </location>
</feature>
<feature type="transmembrane region" description="Helical" evidence="1">
    <location>
        <begin position="87"/>
        <end position="107"/>
    </location>
</feature>
<feature type="transmembrane region" description="Helical" evidence="1">
    <location>
        <begin position="125"/>
        <end position="145"/>
    </location>
</feature>
<feature type="transmembrane region" description="Helical" evidence="1">
    <location>
        <begin position="158"/>
        <end position="178"/>
    </location>
</feature>
<feature type="transmembrane region" description="Helical" evidence="1">
    <location>
        <begin position="190"/>
        <end position="210"/>
    </location>
</feature>
<feature type="transmembrane region" description="Helical" evidence="1">
    <location>
        <begin position="214"/>
        <end position="234"/>
    </location>
</feature>
<feature type="transmembrane region" description="Helical" evidence="1">
    <location>
        <begin position="240"/>
        <end position="260"/>
    </location>
</feature>
<feature type="transmembrane region" description="Helical" evidence="1">
    <location>
        <begin position="264"/>
        <end position="284"/>
    </location>
</feature>
<feature type="transmembrane region" description="Helical" evidence="1">
    <location>
        <begin position="326"/>
        <end position="346"/>
    </location>
</feature>
<protein>
    <recommendedName>
        <fullName evidence="1">Phospho-N-acetylmuramoyl-pentapeptide-transferase</fullName>
        <ecNumber evidence="1">2.7.8.13</ecNumber>
    </recommendedName>
    <alternativeName>
        <fullName evidence="1">UDP-MurNAc-pentapeptide phosphotransferase</fullName>
    </alternativeName>
</protein>
<comment type="function">
    <text evidence="1">Catalyzes the initial step of the lipid cycle reactions in the biosynthesis of the cell wall peptidoglycan: transfers peptidoglycan precursor phospho-MurNAc-pentapeptide from UDP-MurNAc-pentapeptide onto the lipid carrier undecaprenyl phosphate, yielding undecaprenyl-pyrophosphoryl-MurNAc-pentapeptide, known as lipid I.</text>
</comment>
<comment type="catalytic activity">
    <reaction evidence="1">
        <text>UDP-N-acetyl-alpha-D-muramoyl-L-alanyl-gamma-D-glutamyl-meso-2,6-diaminopimeloyl-D-alanyl-D-alanine + di-trans,octa-cis-undecaprenyl phosphate = di-trans,octa-cis-undecaprenyl diphospho-N-acetyl-alpha-D-muramoyl-L-alanyl-D-glutamyl-meso-2,6-diaminopimeloyl-D-alanyl-D-alanine + UMP</text>
        <dbReference type="Rhea" id="RHEA:28386"/>
        <dbReference type="ChEBI" id="CHEBI:57865"/>
        <dbReference type="ChEBI" id="CHEBI:60392"/>
        <dbReference type="ChEBI" id="CHEBI:61386"/>
        <dbReference type="ChEBI" id="CHEBI:61387"/>
        <dbReference type="EC" id="2.7.8.13"/>
    </reaction>
</comment>
<comment type="cofactor">
    <cofactor evidence="1">
        <name>Mg(2+)</name>
        <dbReference type="ChEBI" id="CHEBI:18420"/>
    </cofactor>
</comment>
<comment type="pathway">
    <text evidence="1">Cell wall biogenesis; peptidoglycan biosynthesis.</text>
</comment>
<comment type="subcellular location">
    <subcellularLocation>
        <location evidence="1">Cell membrane</location>
        <topology evidence="1">Multi-pass membrane protein</topology>
    </subcellularLocation>
</comment>
<comment type="similarity">
    <text evidence="1">Belongs to the glycosyltransferase 4 family. MraY subfamily.</text>
</comment>
<organism>
    <name type="scientific">Chloroflexus aggregans (strain MD-66 / DSM 9485)</name>
    <dbReference type="NCBI Taxonomy" id="326427"/>
    <lineage>
        <taxon>Bacteria</taxon>
        <taxon>Bacillati</taxon>
        <taxon>Chloroflexota</taxon>
        <taxon>Chloroflexia</taxon>
        <taxon>Chloroflexales</taxon>
        <taxon>Chloroflexineae</taxon>
        <taxon>Chloroflexaceae</taxon>
        <taxon>Chloroflexus</taxon>
    </lineage>
</organism>
<dbReference type="EC" id="2.7.8.13" evidence="1"/>
<dbReference type="EMBL" id="CP001337">
    <property type="protein sequence ID" value="ACL25710.1"/>
    <property type="molecule type" value="Genomic_DNA"/>
</dbReference>
<dbReference type="RefSeq" id="WP_015941566.1">
    <property type="nucleotide sequence ID" value="NC_011831.1"/>
</dbReference>
<dbReference type="SMR" id="B8G5X7"/>
<dbReference type="STRING" id="326427.Cagg_2848"/>
<dbReference type="KEGG" id="cag:Cagg_2848"/>
<dbReference type="eggNOG" id="COG0472">
    <property type="taxonomic scope" value="Bacteria"/>
</dbReference>
<dbReference type="HOGENOM" id="CLU_023982_0_1_0"/>
<dbReference type="OrthoDB" id="9805475at2"/>
<dbReference type="UniPathway" id="UPA00219"/>
<dbReference type="Proteomes" id="UP000002508">
    <property type="component" value="Chromosome"/>
</dbReference>
<dbReference type="GO" id="GO:0005886">
    <property type="term" value="C:plasma membrane"/>
    <property type="evidence" value="ECO:0007669"/>
    <property type="project" value="UniProtKB-SubCell"/>
</dbReference>
<dbReference type="GO" id="GO:0046872">
    <property type="term" value="F:metal ion binding"/>
    <property type="evidence" value="ECO:0007669"/>
    <property type="project" value="UniProtKB-KW"/>
</dbReference>
<dbReference type="GO" id="GO:0008963">
    <property type="term" value="F:phospho-N-acetylmuramoyl-pentapeptide-transferase activity"/>
    <property type="evidence" value="ECO:0007669"/>
    <property type="project" value="UniProtKB-UniRule"/>
</dbReference>
<dbReference type="GO" id="GO:0051992">
    <property type="term" value="F:UDP-N-acetylmuramoyl-L-alanyl-D-glutamyl-meso-2,6-diaminopimelyl-D-alanyl-D-alanine:undecaprenyl-phosphate transferase activity"/>
    <property type="evidence" value="ECO:0007669"/>
    <property type="project" value="RHEA"/>
</dbReference>
<dbReference type="GO" id="GO:0051301">
    <property type="term" value="P:cell division"/>
    <property type="evidence" value="ECO:0007669"/>
    <property type="project" value="UniProtKB-KW"/>
</dbReference>
<dbReference type="GO" id="GO:0071555">
    <property type="term" value="P:cell wall organization"/>
    <property type="evidence" value="ECO:0007669"/>
    <property type="project" value="UniProtKB-KW"/>
</dbReference>
<dbReference type="GO" id="GO:0009252">
    <property type="term" value="P:peptidoglycan biosynthetic process"/>
    <property type="evidence" value="ECO:0007669"/>
    <property type="project" value="UniProtKB-UniRule"/>
</dbReference>
<dbReference type="GO" id="GO:0008360">
    <property type="term" value="P:regulation of cell shape"/>
    <property type="evidence" value="ECO:0007669"/>
    <property type="project" value="UniProtKB-KW"/>
</dbReference>
<dbReference type="CDD" id="cd06852">
    <property type="entry name" value="GT_MraY"/>
    <property type="match status" value="1"/>
</dbReference>
<dbReference type="HAMAP" id="MF_00038">
    <property type="entry name" value="MraY"/>
    <property type="match status" value="1"/>
</dbReference>
<dbReference type="InterPro" id="IPR000715">
    <property type="entry name" value="Glycosyl_transferase_4"/>
</dbReference>
<dbReference type="InterPro" id="IPR003524">
    <property type="entry name" value="PNAcMuramoyl-5peptid_Trfase"/>
</dbReference>
<dbReference type="InterPro" id="IPR018480">
    <property type="entry name" value="PNAcMuramoyl-5peptid_Trfase_CS"/>
</dbReference>
<dbReference type="NCBIfam" id="TIGR00445">
    <property type="entry name" value="mraY"/>
    <property type="match status" value="1"/>
</dbReference>
<dbReference type="PANTHER" id="PTHR22926">
    <property type="entry name" value="PHOSPHO-N-ACETYLMURAMOYL-PENTAPEPTIDE-TRANSFERASE"/>
    <property type="match status" value="1"/>
</dbReference>
<dbReference type="PANTHER" id="PTHR22926:SF5">
    <property type="entry name" value="PHOSPHO-N-ACETYLMURAMOYL-PENTAPEPTIDE-TRANSFERASE HOMOLOG"/>
    <property type="match status" value="1"/>
</dbReference>
<dbReference type="Pfam" id="PF00953">
    <property type="entry name" value="Glycos_transf_4"/>
    <property type="match status" value="1"/>
</dbReference>
<dbReference type="PROSITE" id="PS01347">
    <property type="entry name" value="MRAY_1"/>
    <property type="match status" value="1"/>
</dbReference>
<keyword id="KW-0131">Cell cycle</keyword>
<keyword id="KW-0132">Cell division</keyword>
<keyword id="KW-1003">Cell membrane</keyword>
<keyword id="KW-0133">Cell shape</keyword>
<keyword id="KW-0961">Cell wall biogenesis/degradation</keyword>
<keyword id="KW-0460">Magnesium</keyword>
<keyword id="KW-0472">Membrane</keyword>
<keyword id="KW-0479">Metal-binding</keyword>
<keyword id="KW-0573">Peptidoglycan synthesis</keyword>
<keyword id="KW-0808">Transferase</keyword>
<keyword id="KW-0812">Transmembrane</keyword>
<keyword id="KW-1133">Transmembrane helix</keyword>